<sequence length="881" mass="94655">MDTAEIRSRFLNHFARRGHTIVPSASLVAQDPTLLLVNAGMVPFKPYFLGDLATPWPRATSVQKVVRTVDIENVGRTARHASFFQMCGNFSFGDYFKAEAIPFAFELLVDGFGFKPDDLWATVYLDDDEAEGIWRELLPAERIQRRGKEDNFWSMGVPGPCGPCSEIYFDRGAAYGREGGPIADEERYLEVWNLVFMQYERGEGAGYDYPILRELPARNIDTGMGLERMATILQGVDNLYEIDISRPVLDLAGQLTGRRYGADPADDVRLRVVADHSRTAAMLIADGVVPSNEGRGYVLRRLLRRAVRDARLLGAREPVMSELFGAIGTAMGPIYPELVDNAETITGVAVAEEASFAETLRTGTTIFDAAVRQVRSTGAATLGGDEAFKLHDTYGFPIDLTLEMAAEAGLSVDEAGFRRLMERQRQTAKADRAARRIGNVDLSAFRPILARSGATTFTGYEELSRESGVVGLVGIADGAGLTVVGEGDEVGVVLDATPFYAESGGQEPDFGLLRFDGGEVEVLDVQRPVPELVLHRVKVRSGELRLGDRVQAEVDENRRRAVSRSHTATHLVHAAFRRALGEGATQAGSLNSPGRLRFDFHALGAVPPSVLTDVEDEINEVALRDLPVRAFVTTQEEARRLGAMALFGEKYGDAVRVVDVGDYARELCGGTHVASSAQLGAVKLLSESSISAGTRRVEGLVGIDAFRYLAREHLLVSQLSTALKARPDELADRVTDIVGRLRDAERELDRLRAAAVLAGAGALAEGAEDVGGVAVVTAEVPAGTSPDDVRLLAMDVRGRLAGRPAVVAVVKADGSSIVVVTDSGARSAGLRAGELVRNSWASLGGKGGGKPDIAQGGGGNSEMIPAVFAKLRGLVAELASR</sequence>
<feature type="chain" id="PRO_0000347617" description="Alanine--tRNA ligase">
    <location>
        <begin position="1"/>
        <end position="881"/>
    </location>
</feature>
<feature type="binding site" evidence="1">
    <location>
        <position position="566"/>
    </location>
    <ligand>
        <name>Zn(2+)</name>
        <dbReference type="ChEBI" id="CHEBI:29105"/>
    </ligand>
</feature>
<feature type="binding site" evidence="1">
    <location>
        <position position="570"/>
    </location>
    <ligand>
        <name>Zn(2+)</name>
        <dbReference type="ChEBI" id="CHEBI:29105"/>
    </ligand>
</feature>
<feature type="binding site" evidence="1">
    <location>
        <position position="668"/>
    </location>
    <ligand>
        <name>Zn(2+)</name>
        <dbReference type="ChEBI" id="CHEBI:29105"/>
    </ligand>
</feature>
<feature type="binding site" evidence="1">
    <location>
        <position position="672"/>
    </location>
    <ligand>
        <name>Zn(2+)</name>
        <dbReference type="ChEBI" id="CHEBI:29105"/>
    </ligand>
</feature>
<protein>
    <recommendedName>
        <fullName evidence="1">Alanine--tRNA ligase</fullName>
        <ecNumber evidence="1">6.1.1.7</ecNumber>
    </recommendedName>
    <alternativeName>
        <fullName evidence="1">Alanyl-tRNA synthetase</fullName>
        <shortName evidence="1">AlaRS</shortName>
    </alternativeName>
</protein>
<keyword id="KW-0030">Aminoacyl-tRNA synthetase</keyword>
<keyword id="KW-0067">ATP-binding</keyword>
<keyword id="KW-0963">Cytoplasm</keyword>
<keyword id="KW-0436">Ligase</keyword>
<keyword id="KW-0479">Metal-binding</keyword>
<keyword id="KW-0547">Nucleotide-binding</keyword>
<keyword id="KW-0648">Protein biosynthesis</keyword>
<keyword id="KW-1185">Reference proteome</keyword>
<keyword id="KW-0694">RNA-binding</keyword>
<keyword id="KW-0820">tRNA-binding</keyword>
<keyword id="KW-0862">Zinc</keyword>
<evidence type="ECO:0000255" key="1">
    <source>
        <dbReference type="HAMAP-Rule" id="MF_00036"/>
    </source>
</evidence>
<evidence type="ECO:0000305" key="2"/>
<organism>
    <name type="scientific">Frankia alni (strain DSM 45986 / CECT 9034 / ACN14a)</name>
    <dbReference type="NCBI Taxonomy" id="326424"/>
    <lineage>
        <taxon>Bacteria</taxon>
        <taxon>Bacillati</taxon>
        <taxon>Actinomycetota</taxon>
        <taxon>Actinomycetes</taxon>
        <taxon>Frankiales</taxon>
        <taxon>Frankiaceae</taxon>
        <taxon>Frankia</taxon>
    </lineage>
</organism>
<dbReference type="EC" id="6.1.1.7" evidence="1"/>
<dbReference type="EMBL" id="CT573213">
    <property type="protein sequence ID" value="CAJ63885.1"/>
    <property type="status" value="ALT_INIT"/>
    <property type="molecule type" value="Genomic_DNA"/>
</dbReference>
<dbReference type="RefSeq" id="WP_041939664.1">
    <property type="nucleotide sequence ID" value="NC_008278.1"/>
</dbReference>
<dbReference type="SMR" id="Q0RF65"/>
<dbReference type="STRING" id="326424.FRAAL5252"/>
<dbReference type="KEGG" id="fal:FRAAL5252"/>
<dbReference type="eggNOG" id="COG0013">
    <property type="taxonomic scope" value="Bacteria"/>
</dbReference>
<dbReference type="HOGENOM" id="CLU_004485_1_1_11"/>
<dbReference type="OrthoDB" id="9803884at2"/>
<dbReference type="Proteomes" id="UP000000657">
    <property type="component" value="Chromosome"/>
</dbReference>
<dbReference type="GO" id="GO:0005829">
    <property type="term" value="C:cytosol"/>
    <property type="evidence" value="ECO:0007669"/>
    <property type="project" value="TreeGrafter"/>
</dbReference>
<dbReference type="GO" id="GO:0004813">
    <property type="term" value="F:alanine-tRNA ligase activity"/>
    <property type="evidence" value="ECO:0007669"/>
    <property type="project" value="UniProtKB-UniRule"/>
</dbReference>
<dbReference type="GO" id="GO:0002161">
    <property type="term" value="F:aminoacyl-tRNA deacylase activity"/>
    <property type="evidence" value="ECO:0007669"/>
    <property type="project" value="TreeGrafter"/>
</dbReference>
<dbReference type="GO" id="GO:0005524">
    <property type="term" value="F:ATP binding"/>
    <property type="evidence" value="ECO:0007669"/>
    <property type="project" value="UniProtKB-UniRule"/>
</dbReference>
<dbReference type="GO" id="GO:0000049">
    <property type="term" value="F:tRNA binding"/>
    <property type="evidence" value="ECO:0007669"/>
    <property type="project" value="UniProtKB-KW"/>
</dbReference>
<dbReference type="GO" id="GO:0008270">
    <property type="term" value="F:zinc ion binding"/>
    <property type="evidence" value="ECO:0007669"/>
    <property type="project" value="UniProtKB-UniRule"/>
</dbReference>
<dbReference type="GO" id="GO:0006419">
    <property type="term" value="P:alanyl-tRNA aminoacylation"/>
    <property type="evidence" value="ECO:0007669"/>
    <property type="project" value="UniProtKB-UniRule"/>
</dbReference>
<dbReference type="CDD" id="cd00673">
    <property type="entry name" value="AlaRS_core"/>
    <property type="match status" value="1"/>
</dbReference>
<dbReference type="FunFam" id="3.10.310.40:FF:000001">
    <property type="entry name" value="Alanine--tRNA ligase"/>
    <property type="match status" value="1"/>
</dbReference>
<dbReference type="FunFam" id="3.30.54.20:FF:000001">
    <property type="entry name" value="Alanine--tRNA ligase"/>
    <property type="match status" value="1"/>
</dbReference>
<dbReference type="FunFam" id="3.30.930.10:FF:000004">
    <property type="entry name" value="Alanine--tRNA ligase"/>
    <property type="match status" value="1"/>
</dbReference>
<dbReference type="FunFam" id="3.30.980.10:FF:000004">
    <property type="entry name" value="Alanine--tRNA ligase, cytoplasmic"/>
    <property type="match status" value="1"/>
</dbReference>
<dbReference type="Gene3D" id="2.40.30.130">
    <property type="match status" value="1"/>
</dbReference>
<dbReference type="Gene3D" id="3.10.310.40">
    <property type="match status" value="1"/>
</dbReference>
<dbReference type="Gene3D" id="3.30.54.20">
    <property type="match status" value="1"/>
</dbReference>
<dbReference type="Gene3D" id="6.10.250.550">
    <property type="match status" value="1"/>
</dbReference>
<dbReference type="Gene3D" id="3.30.930.10">
    <property type="entry name" value="Bira Bifunctional Protein, Domain 2"/>
    <property type="match status" value="1"/>
</dbReference>
<dbReference type="Gene3D" id="3.30.980.10">
    <property type="entry name" value="Threonyl-trna Synthetase, Chain A, domain 2"/>
    <property type="match status" value="1"/>
</dbReference>
<dbReference type="HAMAP" id="MF_00036_B">
    <property type="entry name" value="Ala_tRNA_synth_B"/>
    <property type="match status" value="1"/>
</dbReference>
<dbReference type="InterPro" id="IPR045864">
    <property type="entry name" value="aa-tRNA-synth_II/BPL/LPL"/>
</dbReference>
<dbReference type="InterPro" id="IPR002318">
    <property type="entry name" value="Ala-tRNA-lgiase_IIc"/>
</dbReference>
<dbReference type="InterPro" id="IPR018162">
    <property type="entry name" value="Ala-tRNA-ligase_IIc_anticod-bd"/>
</dbReference>
<dbReference type="InterPro" id="IPR018165">
    <property type="entry name" value="Ala-tRNA-synth_IIc_core"/>
</dbReference>
<dbReference type="InterPro" id="IPR018164">
    <property type="entry name" value="Ala-tRNA-synth_IIc_N"/>
</dbReference>
<dbReference type="InterPro" id="IPR050058">
    <property type="entry name" value="Ala-tRNA_ligase"/>
</dbReference>
<dbReference type="InterPro" id="IPR023033">
    <property type="entry name" value="Ala_tRNA_ligase_euk/bac"/>
</dbReference>
<dbReference type="InterPro" id="IPR003156">
    <property type="entry name" value="DHHA1_dom"/>
</dbReference>
<dbReference type="InterPro" id="IPR018163">
    <property type="entry name" value="Thr/Ala-tRNA-synth_IIc_edit"/>
</dbReference>
<dbReference type="InterPro" id="IPR009000">
    <property type="entry name" value="Transl_B-barrel_sf"/>
</dbReference>
<dbReference type="InterPro" id="IPR012947">
    <property type="entry name" value="tRNA_SAD"/>
</dbReference>
<dbReference type="NCBIfam" id="TIGR00344">
    <property type="entry name" value="alaS"/>
    <property type="match status" value="1"/>
</dbReference>
<dbReference type="PANTHER" id="PTHR11777:SF9">
    <property type="entry name" value="ALANINE--TRNA LIGASE, CYTOPLASMIC"/>
    <property type="match status" value="1"/>
</dbReference>
<dbReference type="PANTHER" id="PTHR11777">
    <property type="entry name" value="ALANYL-TRNA SYNTHETASE"/>
    <property type="match status" value="1"/>
</dbReference>
<dbReference type="Pfam" id="PF02272">
    <property type="entry name" value="DHHA1"/>
    <property type="match status" value="1"/>
</dbReference>
<dbReference type="Pfam" id="PF01411">
    <property type="entry name" value="tRNA-synt_2c"/>
    <property type="match status" value="1"/>
</dbReference>
<dbReference type="Pfam" id="PF07973">
    <property type="entry name" value="tRNA_SAD"/>
    <property type="match status" value="1"/>
</dbReference>
<dbReference type="PRINTS" id="PR00980">
    <property type="entry name" value="TRNASYNTHALA"/>
</dbReference>
<dbReference type="SMART" id="SM00863">
    <property type="entry name" value="tRNA_SAD"/>
    <property type="match status" value="1"/>
</dbReference>
<dbReference type="SUPFAM" id="SSF55681">
    <property type="entry name" value="Class II aaRS and biotin synthetases"/>
    <property type="match status" value="1"/>
</dbReference>
<dbReference type="SUPFAM" id="SSF101353">
    <property type="entry name" value="Putative anticodon-binding domain of alanyl-tRNA synthetase (AlaRS)"/>
    <property type="match status" value="1"/>
</dbReference>
<dbReference type="SUPFAM" id="SSF55186">
    <property type="entry name" value="ThrRS/AlaRS common domain"/>
    <property type="match status" value="1"/>
</dbReference>
<dbReference type="SUPFAM" id="SSF50447">
    <property type="entry name" value="Translation proteins"/>
    <property type="match status" value="1"/>
</dbReference>
<dbReference type="PROSITE" id="PS50860">
    <property type="entry name" value="AA_TRNA_LIGASE_II_ALA"/>
    <property type="match status" value="1"/>
</dbReference>
<proteinExistence type="inferred from homology"/>
<comment type="function">
    <text evidence="1">Catalyzes the attachment of alanine to tRNA(Ala) in a two-step reaction: alanine is first activated by ATP to form Ala-AMP and then transferred to the acceptor end of tRNA(Ala). Also edits incorrectly charged Ser-tRNA(Ala) and Gly-tRNA(Ala) via its editing domain.</text>
</comment>
<comment type="catalytic activity">
    <reaction evidence="1">
        <text>tRNA(Ala) + L-alanine + ATP = L-alanyl-tRNA(Ala) + AMP + diphosphate</text>
        <dbReference type="Rhea" id="RHEA:12540"/>
        <dbReference type="Rhea" id="RHEA-COMP:9657"/>
        <dbReference type="Rhea" id="RHEA-COMP:9923"/>
        <dbReference type="ChEBI" id="CHEBI:30616"/>
        <dbReference type="ChEBI" id="CHEBI:33019"/>
        <dbReference type="ChEBI" id="CHEBI:57972"/>
        <dbReference type="ChEBI" id="CHEBI:78442"/>
        <dbReference type="ChEBI" id="CHEBI:78497"/>
        <dbReference type="ChEBI" id="CHEBI:456215"/>
        <dbReference type="EC" id="6.1.1.7"/>
    </reaction>
</comment>
<comment type="cofactor">
    <cofactor evidence="1">
        <name>Zn(2+)</name>
        <dbReference type="ChEBI" id="CHEBI:29105"/>
    </cofactor>
    <text evidence="1">Binds 1 zinc ion per subunit.</text>
</comment>
<comment type="subcellular location">
    <subcellularLocation>
        <location evidence="1">Cytoplasm</location>
    </subcellularLocation>
</comment>
<comment type="domain">
    <text evidence="1">Consists of three domains; the N-terminal catalytic domain, the editing domain and the C-terminal C-Ala domain. The editing domain removes incorrectly charged amino acids, while the C-Ala domain, along with tRNA(Ala), serves as a bridge to cooperatively bring together the editing and aminoacylation centers thus stimulating deacylation of misacylated tRNAs.</text>
</comment>
<comment type="similarity">
    <text evidence="1">Belongs to the class-II aminoacyl-tRNA synthetase family.</text>
</comment>
<comment type="sequence caution" evidence="2">
    <conflict type="erroneous initiation">
        <sequence resource="EMBL-CDS" id="CAJ63885"/>
    </conflict>
</comment>
<gene>
    <name evidence="1" type="primary">alaS</name>
    <name type="ordered locus">FRAAL5252</name>
</gene>
<accession>Q0RF65</accession>
<name>SYA_FRAAA</name>
<reference key="1">
    <citation type="journal article" date="2007" name="Genome Res.">
        <title>Genome characteristics of facultatively symbiotic Frankia sp. strains reflect host range and host plant biogeography.</title>
        <authorList>
            <person name="Normand P."/>
            <person name="Lapierre P."/>
            <person name="Tisa L.S."/>
            <person name="Gogarten J.P."/>
            <person name="Alloisio N."/>
            <person name="Bagnarol E."/>
            <person name="Bassi C.A."/>
            <person name="Berry A.M."/>
            <person name="Bickhart D.M."/>
            <person name="Choisne N."/>
            <person name="Couloux A."/>
            <person name="Cournoyer B."/>
            <person name="Cruveiller S."/>
            <person name="Daubin V."/>
            <person name="Demange N."/>
            <person name="Francino M.P."/>
            <person name="Goltsman E."/>
            <person name="Huang Y."/>
            <person name="Kopp O.R."/>
            <person name="Labarre L."/>
            <person name="Lapidus A."/>
            <person name="Lavire C."/>
            <person name="Marechal J."/>
            <person name="Martinez M."/>
            <person name="Mastronunzio J.E."/>
            <person name="Mullin B.C."/>
            <person name="Niemann J."/>
            <person name="Pujic P."/>
            <person name="Rawnsley T."/>
            <person name="Rouy Z."/>
            <person name="Schenowitz C."/>
            <person name="Sellstedt A."/>
            <person name="Tavares F."/>
            <person name="Tomkins J.P."/>
            <person name="Vallenet D."/>
            <person name="Valverde C."/>
            <person name="Wall L.G."/>
            <person name="Wang Y."/>
            <person name="Medigue C."/>
            <person name="Benson D.R."/>
        </authorList>
    </citation>
    <scope>NUCLEOTIDE SEQUENCE [LARGE SCALE GENOMIC DNA]</scope>
    <source>
        <strain>DSM 45986 / CECT 9034 / ACN14a</strain>
    </source>
</reference>